<keyword id="KW-0963">Cytoplasm</keyword>
<keyword id="KW-0206">Cytoskeleton</keyword>
<keyword id="KW-0539">Nucleus</keyword>
<keyword id="KW-0597">Phosphoprotein</keyword>
<keyword id="KW-1185">Reference proteome</keyword>
<keyword id="KW-0677">Repeat</keyword>
<keyword id="KW-0802">TPR repeat</keyword>
<keyword id="KW-0833">Ubl conjugation pathway</keyword>
<organism>
    <name type="scientific">Bos taurus</name>
    <name type="common">Bovine</name>
    <dbReference type="NCBI Taxonomy" id="9913"/>
    <lineage>
        <taxon>Eukaryota</taxon>
        <taxon>Metazoa</taxon>
        <taxon>Chordata</taxon>
        <taxon>Craniata</taxon>
        <taxon>Vertebrata</taxon>
        <taxon>Euteleostomi</taxon>
        <taxon>Mammalia</taxon>
        <taxon>Eutheria</taxon>
        <taxon>Laurasiatheria</taxon>
        <taxon>Artiodactyla</taxon>
        <taxon>Ruminantia</taxon>
        <taxon>Pecora</taxon>
        <taxon>Bovidae</taxon>
        <taxon>Bovinae</taxon>
        <taxon>Bos</taxon>
    </lineage>
</organism>
<gene>
    <name type="primary">CDC27</name>
</gene>
<comment type="function">
    <text evidence="2">Component of the anaphase promoting complex/cyclosome (APC/C), a cell cycle-regulated E3 ubiquitin ligase that controls progression through mitosis and the G1 phase of the cell cycle. The APC/C complex acts by mediating ubiquitination and subsequent degradation of target proteins: it mainly mediates the formation of 'Lys-11'-linked polyubiquitin chains and, to a lower extent, the formation of 'Lys-48'- and 'Lys-63'-linked polyubiquitin chains. The APC/C complex catalyzes assembly of branched 'Lys-11'-/'Lys-48'-linked branched ubiquitin chains on target proteins.</text>
</comment>
<comment type="pathway">
    <text evidence="2">Protein modification; protein ubiquitination.</text>
</comment>
<comment type="subunit">
    <text evidence="1 2">Homodimer. The mammalian APC/C is composed at least of 14 distinct subunits ANAPC1, ANAPC2, CDC27/APC3, ANAPC4, ANAPC5, CDC16/APC6, ANAPC7, CDC23/APC8, ANAPC10, ANAPC11, CDC26/APC12, ANAPC13, ANAPC15 and ANAPC16 that assemble into a complex of at least 19 chains with a combined molecular mass of around 1.2 MDa; APC/C interacts with FZR1 and FBXO5 (By similarity). Interacts with RB. Interacts with FAM168B/MANI (By similarity). Interacts with MCPH1 (By similarity).</text>
</comment>
<comment type="subcellular location">
    <subcellularLocation>
        <location evidence="2">Nucleus</location>
    </subcellularLocation>
    <subcellularLocation>
        <location evidence="2">Cytoplasm</location>
        <location evidence="2">Cytoskeleton</location>
        <location evidence="2">Spindle</location>
    </subcellularLocation>
</comment>
<comment type="PTM">
    <text evidence="2">Phosphorylated. Phosphorylation on Ser-427 and Thr-447 occurs specifically during mitosis (By similarity).</text>
</comment>
<comment type="similarity">
    <text evidence="4">Belongs to the APC3/CDC27 family.</text>
</comment>
<name>CDC27_BOVIN</name>
<dbReference type="EMBL" id="BC153259">
    <property type="protein sequence ID" value="AAI53260.1"/>
    <property type="molecule type" value="mRNA"/>
</dbReference>
<dbReference type="RefSeq" id="NP_001098898.1">
    <property type="nucleotide sequence ID" value="NM_001105428.1"/>
</dbReference>
<dbReference type="SMR" id="A7Z061"/>
<dbReference type="FunCoup" id="A7Z061">
    <property type="interactions" value="5087"/>
</dbReference>
<dbReference type="STRING" id="9913.ENSBTAP00000057334"/>
<dbReference type="PaxDb" id="9913-ENSBTAP00000003533"/>
<dbReference type="GeneID" id="540660"/>
<dbReference type="KEGG" id="bta:540660"/>
<dbReference type="CTD" id="996"/>
<dbReference type="VEuPathDB" id="HostDB:ENSBTAG00000002726"/>
<dbReference type="eggNOG" id="KOG1126">
    <property type="taxonomic scope" value="Eukaryota"/>
</dbReference>
<dbReference type="HOGENOM" id="CLU_008850_1_0_1"/>
<dbReference type="InParanoid" id="A7Z061"/>
<dbReference type="OMA" id="WHSPQAW"/>
<dbReference type="OrthoDB" id="329563at2759"/>
<dbReference type="TreeFam" id="TF101058"/>
<dbReference type="Reactome" id="R-BTA-141430">
    <property type="pathway name" value="Inactivation of APC/C via direct inhibition of the APC/C complex"/>
</dbReference>
<dbReference type="Reactome" id="R-BTA-174048">
    <property type="pathway name" value="APC/C:Cdc20 mediated degradation of Cyclin B"/>
</dbReference>
<dbReference type="Reactome" id="R-BTA-174084">
    <property type="pathway name" value="Autodegradation of Cdh1 by Cdh1:APC/C"/>
</dbReference>
<dbReference type="Reactome" id="R-BTA-174154">
    <property type="pathway name" value="APC/C:Cdc20 mediated degradation of Securin"/>
</dbReference>
<dbReference type="Reactome" id="R-BTA-174178">
    <property type="pathway name" value="APC/C:Cdh1 mediated degradation of Cdc20 and other APC/C:Cdh1 targeted proteins in late mitosis/early G1"/>
</dbReference>
<dbReference type="Reactome" id="R-BTA-174184">
    <property type="pathway name" value="Cdc20:Phospho-APC/C mediated degradation of Cyclin A"/>
</dbReference>
<dbReference type="Reactome" id="R-BTA-176407">
    <property type="pathway name" value="Conversion from APC/C:Cdc20 to APC/C:Cdh1 in late anaphase"/>
</dbReference>
<dbReference type="Reactome" id="R-BTA-176408">
    <property type="pathway name" value="Regulation of APC/C activators between G1/S and early anaphase"/>
</dbReference>
<dbReference type="Reactome" id="R-BTA-176409">
    <property type="pathway name" value="APC/C:Cdc20 mediated degradation of mitotic proteins"/>
</dbReference>
<dbReference type="Reactome" id="R-BTA-176412">
    <property type="pathway name" value="Phosphorylation of the APC/C"/>
</dbReference>
<dbReference type="Reactome" id="R-BTA-179409">
    <property type="pathway name" value="APC-Cdc20 mediated degradation of Nek2A"/>
</dbReference>
<dbReference type="Reactome" id="R-BTA-2467813">
    <property type="pathway name" value="Separation of Sister Chromatids"/>
</dbReference>
<dbReference type="Reactome" id="R-BTA-2559582">
    <property type="pathway name" value="Senescence-Associated Secretory Phenotype (SASP)"/>
</dbReference>
<dbReference type="Reactome" id="R-BTA-68867">
    <property type="pathway name" value="Assembly of the pre-replicative complex"/>
</dbReference>
<dbReference type="Reactome" id="R-BTA-69017">
    <property type="pathway name" value="CDK-mediated phosphorylation and removal of Cdc6"/>
</dbReference>
<dbReference type="Reactome" id="R-BTA-983168">
    <property type="pathway name" value="Antigen processing: Ubiquitination &amp; Proteasome degradation"/>
</dbReference>
<dbReference type="UniPathway" id="UPA00143"/>
<dbReference type="Proteomes" id="UP000009136">
    <property type="component" value="Chromosome 19"/>
</dbReference>
<dbReference type="Bgee" id="ENSBTAG00000002726">
    <property type="expression patterns" value="Expressed in oocyte and 107 other cell types or tissues"/>
</dbReference>
<dbReference type="GO" id="GO:0005680">
    <property type="term" value="C:anaphase-promoting complex"/>
    <property type="evidence" value="ECO:0000250"/>
    <property type="project" value="UniProtKB"/>
</dbReference>
<dbReference type="GO" id="GO:0005737">
    <property type="term" value="C:cytoplasm"/>
    <property type="evidence" value="ECO:0000318"/>
    <property type="project" value="GO_Central"/>
</dbReference>
<dbReference type="GO" id="GO:0005634">
    <property type="term" value="C:nucleus"/>
    <property type="evidence" value="ECO:0000250"/>
    <property type="project" value="UniProtKB"/>
</dbReference>
<dbReference type="GO" id="GO:0005819">
    <property type="term" value="C:spindle"/>
    <property type="evidence" value="ECO:0000250"/>
    <property type="project" value="UniProtKB"/>
</dbReference>
<dbReference type="GO" id="GO:0031145">
    <property type="term" value="P:anaphase-promoting complex-dependent catabolic process"/>
    <property type="evidence" value="ECO:0000250"/>
    <property type="project" value="UniProtKB"/>
</dbReference>
<dbReference type="GO" id="GO:0051301">
    <property type="term" value="P:cell division"/>
    <property type="evidence" value="ECO:0000318"/>
    <property type="project" value="GO_Central"/>
</dbReference>
<dbReference type="GO" id="GO:0007091">
    <property type="term" value="P:metaphase/anaphase transition of mitotic cell cycle"/>
    <property type="evidence" value="ECO:0000318"/>
    <property type="project" value="GO_Central"/>
</dbReference>
<dbReference type="GO" id="GO:0141198">
    <property type="term" value="P:protein branched polyubiquitination"/>
    <property type="evidence" value="ECO:0000250"/>
    <property type="project" value="UniProtKB"/>
</dbReference>
<dbReference type="GO" id="GO:0070979">
    <property type="term" value="P:protein K11-linked ubiquitination"/>
    <property type="evidence" value="ECO:0000250"/>
    <property type="project" value="UniProtKB"/>
</dbReference>
<dbReference type="GO" id="GO:0070936">
    <property type="term" value="P:protein K48-linked ubiquitination"/>
    <property type="evidence" value="ECO:0000250"/>
    <property type="project" value="UniProtKB"/>
</dbReference>
<dbReference type="GO" id="GO:0016567">
    <property type="term" value="P:protein ubiquitination"/>
    <property type="evidence" value="ECO:0000318"/>
    <property type="project" value="GO_Central"/>
</dbReference>
<dbReference type="FunFam" id="1.25.40.10:FF:000085">
    <property type="entry name" value="Cell division cycle 27 homolog (S. cerevisiae)"/>
    <property type="match status" value="1"/>
</dbReference>
<dbReference type="FunFam" id="1.25.40.10:FF:000018">
    <property type="entry name" value="Cell division cycle protein 27 homolog B"/>
    <property type="match status" value="1"/>
</dbReference>
<dbReference type="FunFam" id="1.25.40.10:FF:000045">
    <property type="entry name" value="Cell division cycle protein 27 isoform X3"/>
    <property type="match status" value="1"/>
</dbReference>
<dbReference type="FunFam" id="1.25.40.10:FF:000051">
    <property type="entry name" value="Cell division cycle protein 27 isoform X3"/>
    <property type="match status" value="1"/>
</dbReference>
<dbReference type="Gene3D" id="1.25.40.10">
    <property type="entry name" value="Tetratricopeptide repeat domain"/>
    <property type="match status" value="4"/>
</dbReference>
<dbReference type="InterPro" id="IPR011990">
    <property type="entry name" value="TPR-like_helical_dom_sf"/>
</dbReference>
<dbReference type="InterPro" id="IPR019734">
    <property type="entry name" value="TPR_rpt"/>
</dbReference>
<dbReference type="PANTHER" id="PTHR12558">
    <property type="entry name" value="CELL DIVISION CYCLE 16,23,27"/>
    <property type="match status" value="1"/>
</dbReference>
<dbReference type="PANTHER" id="PTHR12558:SF13">
    <property type="entry name" value="CELL DIVISION CYCLE PROTEIN 27 HOMOLOG"/>
    <property type="match status" value="1"/>
</dbReference>
<dbReference type="Pfam" id="PF12895">
    <property type="entry name" value="ANAPC3"/>
    <property type="match status" value="1"/>
</dbReference>
<dbReference type="Pfam" id="PF00515">
    <property type="entry name" value="TPR_1"/>
    <property type="match status" value="2"/>
</dbReference>
<dbReference type="Pfam" id="PF13181">
    <property type="entry name" value="TPR_8"/>
    <property type="match status" value="2"/>
</dbReference>
<dbReference type="SMART" id="SM00028">
    <property type="entry name" value="TPR"/>
    <property type="match status" value="8"/>
</dbReference>
<dbReference type="SUPFAM" id="SSF48452">
    <property type="entry name" value="TPR-like"/>
    <property type="match status" value="2"/>
</dbReference>
<dbReference type="PROSITE" id="PS50005">
    <property type="entry name" value="TPR"/>
    <property type="match status" value="8"/>
</dbReference>
<dbReference type="PROSITE" id="PS50293">
    <property type="entry name" value="TPR_REGION"/>
    <property type="match status" value="2"/>
</dbReference>
<accession>A7Z061</accession>
<sequence length="825" mass="91870">MTVLQEPVQAAIWQALNHYAYRDAVFLAERLYAEVHSEEALFLLATCYYRSGKAYKAYRLLKGHSCTTPQCKYLLAKCCVDLSKLAEGEQILSGGVFNKQKSHDDIVTEFGDSACFTLSLLGHVYCKTDRLAKGSECYQKSLSLNPFLWSPFESLCEIGEKPDPDQTFKLTSLQNFSSCLPNSCTTLVSNHSLSHRQPETVLTETPQDTIELNRLNLESSNSKYSLNTDSSVSYIDSAVISPDTVPLGTGTSILSKQVQNKPKTGRSLLGGPAALSPLTPSFGILPLETPSPGDGSYLQNYTNTSSVIDVPPTGAPSKKSVARIGQTGTKSVFSQSGNSREVTPILVAQTQSSGPQTSTTPQVLSPTITSPPNALPRRSSRLFTSDSSTTKENSKKLKMKFPPKIPNRKTKSKTNKGGITQPNINDSLEITKLDSSIISEGKISTITPQIQAFNLQKAAAEGLMSLLREMGKGYLALCSYNCKEAINILSHLPSHHYNTGWVLCQIGRAYFELSEYMQAERIFSEVRRIENYRVEGMEIYSTTLWHLQKDVALSVLSKDLTDMDKNSPEAWCAAGNCFSLQREHDIAIKFFQRAIQVDPNYAYAYTLLGHEFVLTEELDKALACFRNAIRVNPRHYNAWYGLGMIYYKQEKFSLAEMHFQKALDINPQSSVLLCHIGVVQHALKKSEKALDTLNKAIVIDPKNPLCKFHRASVLFANEKYKSALQELEELKQIVPKESLVYFLIGKVYKKLGQTHLALMNFSWAMDLDPKGANNQIKEAIDKRYLPDDEEPITQEEQIMGTDESQESSMTDADDTQLHAAESDEF</sequence>
<protein>
    <recommendedName>
        <fullName>Cell division cycle protein 27 homolog</fullName>
    </recommendedName>
</protein>
<evidence type="ECO:0000250" key="1">
    <source>
        <dbReference type="UniProtKB" id="A2A6Q5"/>
    </source>
</evidence>
<evidence type="ECO:0000250" key="2">
    <source>
        <dbReference type="UniProtKB" id="P30260"/>
    </source>
</evidence>
<evidence type="ECO:0000256" key="3">
    <source>
        <dbReference type="SAM" id="MobiDB-lite"/>
    </source>
</evidence>
<evidence type="ECO:0000305" key="4"/>
<feature type="chain" id="PRO_0000390472" description="Cell division cycle protein 27 homolog">
    <location>
        <begin position="1"/>
        <end position="825"/>
    </location>
</feature>
<feature type="repeat" description="TPR 1">
    <location>
        <begin position="6"/>
        <end position="35"/>
    </location>
</feature>
<feature type="repeat" description="TPR 2">
    <location>
        <begin position="38"/>
        <end position="65"/>
    </location>
</feature>
<feature type="repeat" description="TPR 3">
    <location>
        <begin position="67"/>
        <end position="99"/>
    </location>
</feature>
<feature type="repeat" description="TPR 4">
    <location>
        <begin position="115"/>
        <end position="145"/>
    </location>
</feature>
<feature type="repeat" description="TPR 5">
    <location>
        <begin position="465"/>
        <end position="495"/>
    </location>
</feature>
<feature type="repeat" description="TPR 6">
    <location>
        <begin position="499"/>
        <end position="528"/>
    </location>
</feature>
<feature type="repeat" description="TPR 7">
    <location>
        <begin position="533"/>
        <end position="563"/>
    </location>
</feature>
<feature type="repeat" description="TPR 8">
    <location>
        <begin position="567"/>
        <end position="598"/>
    </location>
</feature>
<feature type="repeat" description="TPR 9">
    <location>
        <begin position="601"/>
        <end position="631"/>
    </location>
</feature>
<feature type="repeat" description="TPR 10">
    <location>
        <begin position="635"/>
        <end position="667"/>
    </location>
</feature>
<feature type="repeat" description="TPR 11">
    <location>
        <begin position="670"/>
        <end position="702"/>
    </location>
</feature>
<feature type="repeat" description="TPR 12">
    <location>
        <begin position="704"/>
        <end position="734"/>
    </location>
</feature>
<feature type="repeat" description="TPR 13">
    <location>
        <begin position="737"/>
        <end position="768"/>
    </location>
</feature>
<feature type="region of interest" description="Disordered" evidence="3">
    <location>
        <begin position="305"/>
        <end position="423"/>
    </location>
</feature>
<feature type="region of interest" description="Disordered" evidence="3">
    <location>
        <begin position="782"/>
        <end position="825"/>
    </location>
</feature>
<feature type="compositionally biased region" description="Polar residues" evidence="3">
    <location>
        <begin position="326"/>
        <end position="341"/>
    </location>
</feature>
<feature type="compositionally biased region" description="Low complexity" evidence="3">
    <location>
        <begin position="349"/>
        <end position="362"/>
    </location>
</feature>
<feature type="compositionally biased region" description="Polar residues" evidence="3">
    <location>
        <begin position="363"/>
        <end position="372"/>
    </location>
</feature>
<feature type="compositionally biased region" description="Polar residues" evidence="3">
    <location>
        <begin position="381"/>
        <end position="391"/>
    </location>
</feature>
<feature type="compositionally biased region" description="Basic residues" evidence="3">
    <location>
        <begin position="396"/>
        <end position="414"/>
    </location>
</feature>
<feature type="modified residue" description="Phosphothreonine" evidence="2">
    <location>
        <position position="205"/>
    </location>
</feature>
<feature type="modified residue" description="Phosphothreonine" evidence="2">
    <location>
        <position position="209"/>
    </location>
</feature>
<feature type="modified residue" description="Phosphothreonine" evidence="2">
    <location>
        <position position="244"/>
    </location>
</feature>
<feature type="modified residue" description="Phosphoserine" evidence="2">
    <location>
        <position position="291"/>
    </location>
</feature>
<feature type="modified residue" description="Phosphothreonine" evidence="2">
    <location>
        <position position="313"/>
    </location>
</feature>
<feature type="modified residue" description="Phosphoserine" evidence="2">
    <location>
        <position position="339"/>
    </location>
</feature>
<feature type="modified residue" description="Phosphothreonine" evidence="2">
    <location>
        <position position="367"/>
    </location>
</feature>
<feature type="modified residue" description="Phosphoserine" evidence="2">
    <location>
        <position position="380"/>
    </location>
</feature>
<feature type="modified residue" description="Phosphoserine" evidence="2">
    <location>
        <position position="387"/>
    </location>
</feature>
<feature type="modified residue" description="Phosphoserine" evidence="2">
    <location>
        <position position="427"/>
    </location>
</feature>
<feature type="modified residue" description="Phosphothreonine" evidence="2">
    <location>
        <position position="431"/>
    </location>
</feature>
<feature type="modified residue" description="Phosphoserine" evidence="2">
    <location>
        <position position="436"/>
    </location>
</feature>
<feature type="modified residue" description="Phosphoserine" evidence="2">
    <location>
        <position position="439"/>
    </location>
</feature>
<feature type="modified residue" description="Phosphothreonine" evidence="2">
    <location>
        <position position="447"/>
    </location>
</feature>
<feature type="modified residue" description="Phosphoserine" evidence="2">
    <location>
        <position position="822"/>
    </location>
</feature>
<proteinExistence type="evidence at transcript level"/>
<reference key="1">
    <citation type="submission" date="2007-09" db="EMBL/GenBank/DDBJ databases">
        <authorList>
            <consortium name="NIH - Mammalian Gene Collection (MGC) project"/>
        </authorList>
    </citation>
    <scope>NUCLEOTIDE SEQUENCE [LARGE SCALE MRNA]</scope>
    <source>
        <strain>Hereford</strain>
        <tissue>Ascending colon</tissue>
    </source>
</reference>